<feature type="initiator methionine" description="Removed" evidence="1">
    <location>
        <position position="1"/>
    </location>
</feature>
<feature type="chain" id="PRO_0000122830" description="Protein RecA">
    <location>
        <begin position="2"/>
        <end position="354"/>
    </location>
</feature>
<feature type="binding site" evidence="2">
    <location>
        <begin position="67"/>
        <end position="74"/>
    </location>
    <ligand>
        <name>ATP</name>
        <dbReference type="ChEBI" id="CHEBI:30616"/>
    </ligand>
</feature>
<keyword id="KW-0067">ATP-binding</keyword>
<keyword id="KW-0963">Cytoplasm</keyword>
<keyword id="KW-0227">DNA damage</keyword>
<keyword id="KW-0233">DNA recombination</keyword>
<keyword id="KW-0234">DNA repair</keyword>
<keyword id="KW-0238">DNA-binding</keyword>
<keyword id="KW-0547">Nucleotide-binding</keyword>
<keyword id="KW-0742">SOS response</keyword>
<comment type="function">
    <text>Can catalyze the hydrolysis of ATP in the presence of single-stranded DNA, the ATP-dependent uptake of single-stranded DNA by duplex DNA, and the ATP-dependent hybridization of homologous single-stranded DNAs. It interacts with LexA causing its activation and leading to its autocatalytic cleavage.</text>
</comment>
<comment type="subcellular location">
    <subcellularLocation>
        <location evidence="2">Cytoplasm</location>
    </subcellularLocation>
</comment>
<comment type="similarity">
    <text evidence="2">Belongs to the RecA family.</text>
</comment>
<organism>
    <name type="scientific">Serratia marcescens</name>
    <dbReference type="NCBI Taxonomy" id="615"/>
    <lineage>
        <taxon>Bacteria</taxon>
        <taxon>Pseudomonadati</taxon>
        <taxon>Pseudomonadota</taxon>
        <taxon>Gammaproteobacteria</taxon>
        <taxon>Enterobacterales</taxon>
        <taxon>Yersiniaceae</taxon>
        <taxon>Serratia</taxon>
    </lineage>
</organism>
<accession>P17479</accession>
<protein>
    <recommendedName>
        <fullName evidence="2">Protein RecA</fullName>
    </recommendedName>
    <alternativeName>
        <fullName evidence="2">Recombinase A</fullName>
    </alternativeName>
</protein>
<name>RECA_SERMA</name>
<gene>
    <name evidence="2" type="primary">recA</name>
</gene>
<proteinExistence type="inferred from homology"/>
<evidence type="ECO:0000250" key="1"/>
<evidence type="ECO:0000255" key="2">
    <source>
        <dbReference type="HAMAP-Rule" id="MF_00268"/>
    </source>
</evidence>
<reference key="1">
    <citation type="journal article" date="1990" name="J. Bacteriol.">
        <title>Expression of Serratia marcescens extracellular proteins requires recA.</title>
        <authorList>
            <person name="Ball T.K."/>
            <person name="Wasmuth C.R."/>
            <person name="Braunagel S.C."/>
            <person name="Benedik M.J."/>
        </authorList>
    </citation>
    <scope>NUCLEOTIDE SEQUENCE [GENOMIC DNA]</scope>
    <source>
        <strain>SM6</strain>
    </source>
</reference>
<dbReference type="EMBL" id="M22935">
    <property type="protein sequence ID" value="AAA26567.1"/>
    <property type="molecule type" value="Genomic_DNA"/>
</dbReference>
<dbReference type="RefSeq" id="WP_004932541.1">
    <property type="nucleotide sequence ID" value="NZ_WVHX01000001.1"/>
</dbReference>
<dbReference type="SMR" id="P17479"/>
<dbReference type="STRING" id="273526.SMDB11_0158"/>
<dbReference type="GeneID" id="98186633"/>
<dbReference type="OrthoDB" id="9776733at2"/>
<dbReference type="GO" id="GO:0005829">
    <property type="term" value="C:cytosol"/>
    <property type="evidence" value="ECO:0007669"/>
    <property type="project" value="TreeGrafter"/>
</dbReference>
<dbReference type="GO" id="GO:0005524">
    <property type="term" value="F:ATP binding"/>
    <property type="evidence" value="ECO:0007669"/>
    <property type="project" value="UniProtKB-UniRule"/>
</dbReference>
<dbReference type="GO" id="GO:0016887">
    <property type="term" value="F:ATP hydrolysis activity"/>
    <property type="evidence" value="ECO:0007669"/>
    <property type="project" value="InterPro"/>
</dbReference>
<dbReference type="GO" id="GO:0140664">
    <property type="term" value="F:ATP-dependent DNA damage sensor activity"/>
    <property type="evidence" value="ECO:0007669"/>
    <property type="project" value="InterPro"/>
</dbReference>
<dbReference type="GO" id="GO:0003684">
    <property type="term" value="F:damaged DNA binding"/>
    <property type="evidence" value="ECO:0007669"/>
    <property type="project" value="UniProtKB-UniRule"/>
</dbReference>
<dbReference type="GO" id="GO:0003697">
    <property type="term" value="F:single-stranded DNA binding"/>
    <property type="evidence" value="ECO:0007669"/>
    <property type="project" value="UniProtKB-UniRule"/>
</dbReference>
<dbReference type="GO" id="GO:0006310">
    <property type="term" value="P:DNA recombination"/>
    <property type="evidence" value="ECO:0007669"/>
    <property type="project" value="UniProtKB-UniRule"/>
</dbReference>
<dbReference type="GO" id="GO:0006281">
    <property type="term" value="P:DNA repair"/>
    <property type="evidence" value="ECO:0007669"/>
    <property type="project" value="UniProtKB-UniRule"/>
</dbReference>
<dbReference type="GO" id="GO:0009432">
    <property type="term" value="P:SOS response"/>
    <property type="evidence" value="ECO:0007669"/>
    <property type="project" value="UniProtKB-UniRule"/>
</dbReference>
<dbReference type="CDD" id="cd00983">
    <property type="entry name" value="RecA"/>
    <property type="match status" value="1"/>
</dbReference>
<dbReference type="FunFam" id="3.40.50.300:FF:000087">
    <property type="entry name" value="Recombinase RecA"/>
    <property type="match status" value="1"/>
</dbReference>
<dbReference type="Gene3D" id="3.40.50.300">
    <property type="entry name" value="P-loop containing nucleotide triphosphate hydrolases"/>
    <property type="match status" value="1"/>
</dbReference>
<dbReference type="HAMAP" id="MF_00268">
    <property type="entry name" value="RecA"/>
    <property type="match status" value="1"/>
</dbReference>
<dbReference type="InterPro" id="IPR003593">
    <property type="entry name" value="AAA+_ATPase"/>
</dbReference>
<dbReference type="InterPro" id="IPR013765">
    <property type="entry name" value="DNA_recomb/repair_RecA"/>
</dbReference>
<dbReference type="InterPro" id="IPR020584">
    <property type="entry name" value="DNA_recomb/repair_RecA_CS"/>
</dbReference>
<dbReference type="InterPro" id="IPR027417">
    <property type="entry name" value="P-loop_NTPase"/>
</dbReference>
<dbReference type="InterPro" id="IPR049261">
    <property type="entry name" value="RecA-like_C"/>
</dbReference>
<dbReference type="InterPro" id="IPR049428">
    <property type="entry name" value="RecA-like_N"/>
</dbReference>
<dbReference type="InterPro" id="IPR020588">
    <property type="entry name" value="RecA_ATP-bd"/>
</dbReference>
<dbReference type="InterPro" id="IPR023400">
    <property type="entry name" value="RecA_C_sf"/>
</dbReference>
<dbReference type="InterPro" id="IPR020587">
    <property type="entry name" value="RecA_monomer-monomer_interface"/>
</dbReference>
<dbReference type="NCBIfam" id="TIGR02012">
    <property type="entry name" value="tigrfam_recA"/>
    <property type="match status" value="1"/>
</dbReference>
<dbReference type="PANTHER" id="PTHR45900:SF1">
    <property type="entry name" value="MITOCHONDRIAL DNA REPAIR PROTEIN RECA HOMOLOG-RELATED"/>
    <property type="match status" value="1"/>
</dbReference>
<dbReference type="PANTHER" id="PTHR45900">
    <property type="entry name" value="RECA"/>
    <property type="match status" value="1"/>
</dbReference>
<dbReference type="Pfam" id="PF00154">
    <property type="entry name" value="RecA"/>
    <property type="match status" value="1"/>
</dbReference>
<dbReference type="Pfam" id="PF21096">
    <property type="entry name" value="RecA_C"/>
    <property type="match status" value="1"/>
</dbReference>
<dbReference type="PRINTS" id="PR00142">
    <property type="entry name" value="RECA"/>
</dbReference>
<dbReference type="SMART" id="SM00382">
    <property type="entry name" value="AAA"/>
    <property type="match status" value="1"/>
</dbReference>
<dbReference type="SUPFAM" id="SSF52540">
    <property type="entry name" value="P-loop containing nucleoside triphosphate hydrolases"/>
    <property type="match status" value="1"/>
</dbReference>
<dbReference type="SUPFAM" id="SSF54752">
    <property type="entry name" value="RecA protein, C-terminal domain"/>
    <property type="match status" value="1"/>
</dbReference>
<dbReference type="PROSITE" id="PS00321">
    <property type="entry name" value="RECA_1"/>
    <property type="match status" value="1"/>
</dbReference>
<dbReference type="PROSITE" id="PS50162">
    <property type="entry name" value="RECA_2"/>
    <property type="match status" value="1"/>
</dbReference>
<dbReference type="PROSITE" id="PS50163">
    <property type="entry name" value="RECA_3"/>
    <property type="match status" value="1"/>
</dbReference>
<sequence>MAIDENKQKALAAALGQIEKQFGKGSIMRLGEDRSMDVETISTGSLSLDIALGAGGLPMGRIVEIYGPESSGKTTLTLQVIAAAQREGKTCAFIDAEHALDPIYAKKLGVDIDNLLCSQPDTGEQALEICDALTRSGAVDVIIVDSVAALTPKAEIEGEIGDSHMGLAARMMSQAMRKLAGNLKNANTLLIFINQIRMKIGVMFGNPETTTGGNALKFYASVRLDIRRIGAIKEGDEVVGSETRVKVVKNKIAAPFKQAEFQIMYGEGINSRGELVDLGVKHKMIEKAGAWYSYNGEKIGQGKANACNFLKENPAIAAELDKKLRDLLLHSGGELVAASGDDFEDDEAETSEQF</sequence>